<accession>Q9P382</accession>
<keyword id="KW-0472">Membrane</keyword>
<keyword id="KW-0509">mRNA transport</keyword>
<keyword id="KW-0906">Nuclear pore complex</keyword>
<keyword id="KW-0539">Nucleus</keyword>
<keyword id="KW-0653">Protein transport</keyword>
<keyword id="KW-1185">Reference proteome</keyword>
<keyword id="KW-0811">Translocation</keyword>
<keyword id="KW-0813">Transport</keyword>
<reference evidence="5" key="1">
    <citation type="journal article" date="2002" name="Nature">
        <title>The genome sequence of Schizosaccharomyces pombe.</title>
        <authorList>
            <person name="Wood V."/>
            <person name="Gwilliam R."/>
            <person name="Rajandream M.A."/>
            <person name="Lyne M.H."/>
            <person name="Lyne R."/>
            <person name="Stewart A."/>
            <person name="Sgouros J.G."/>
            <person name="Peat N."/>
            <person name="Hayles J."/>
            <person name="Baker S.G."/>
            <person name="Basham D."/>
            <person name="Bowman S."/>
            <person name="Brooks K."/>
            <person name="Brown D."/>
            <person name="Brown S."/>
            <person name="Chillingworth T."/>
            <person name="Churcher C.M."/>
            <person name="Collins M."/>
            <person name="Connor R."/>
            <person name="Cronin A."/>
            <person name="Davis P."/>
            <person name="Feltwell T."/>
            <person name="Fraser A."/>
            <person name="Gentles S."/>
            <person name="Goble A."/>
            <person name="Hamlin N."/>
            <person name="Harris D.E."/>
            <person name="Hidalgo J."/>
            <person name="Hodgson G."/>
            <person name="Holroyd S."/>
            <person name="Hornsby T."/>
            <person name="Howarth S."/>
            <person name="Huckle E.J."/>
            <person name="Hunt S."/>
            <person name="Jagels K."/>
            <person name="James K.D."/>
            <person name="Jones L."/>
            <person name="Jones M."/>
            <person name="Leather S."/>
            <person name="McDonald S."/>
            <person name="McLean J."/>
            <person name="Mooney P."/>
            <person name="Moule S."/>
            <person name="Mungall K.L."/>
            <person name="Murphy L.D."/>
            <person name="Niblett D."/>
            <person name="Odell C."/>
            <person name="Oliver K."/>
            <person name="O'Neil S."/>
            <person name="Pearson D."/>
            <person name="Quail M.A."/>
            <person name="Rabbinowitsch E."/>
            <person name="Rutherford K.M."/>
            <person name="Rutter S."/>
            <person name="Saunders D."/>
            <person name="Seeger K."/>
            <person name="Sharp S."/>
            <person name="Skelton J."/>
            <person name="Simmonds M.N."/>
            <person name="Squares R."/>
            <person name="Squares S."/>
            <person name="Stevens K."/>
            <person name="Taylor K."/>
            <person name="Taylor R.G."/>
            <person name="Tivey A."/>
            <person name="Walsh S.V."/>
            <person name="Warren T."/>
            <person name="Whitehead S."/>
            <person name="Woodward J.R."/>
            <person name="Volckaert G."/>
            <person name="Aert R."/>
            <person name="Robben J."/>
            <person name="Grymonprez B."/>
            <person name="Weltjens I."/>
            <person name="Vanstreels E."/>
            <person name="Rieger M."/>
            <person name="Schaefer M."/>
            <person name="Mueller-Auer S."/>
            <person name="Gabel C."/>
            <person name="Fuchs M."/>
            <person name="Duesterhoeft A."/>
            <person name="Fritzc C."/>
            <person name="Holzer E."/>
            <person name="Moestl D."/>
            <person name="Hilbert H."/>
            <person name="Borzym K."/>
            <person name="Langer I."/>
            <person name="Beck A."/>
            <person name="Lehrach H."/>
            <person name="Reinhardt R."/>
            <person name="Pohl T.M."/>
            <person name="Eger P."/>
            <person name="Zimmermann W."/>
            <person name="Wedler H."/>
            <person name="Wambutt R."/>
            <person name="Purnelle B."/>
            <person name="Goffeau A."/>
            <person name="Cadieu E."/>
            <person name="Dreano S."/>
            <person name="Gloux S."/>
            <person name="Lelaure V."/>
            <person name="Mottier S."/>
            <person name="Galibert F."/>
            <person name="Aves S.J."/>
            <person name="Xiang Z."/>
            <person name="Hunt C."/>
            <person name="Moore K."/>
            <person name="Hurst S.M."/>
            <person name="Lucas M."/>
            <person name="Rochet M."/>
            <person name="Gaillardin C."/>
            <person name="Tallada V.A."/>
            <person name="Garzon A."/>
            <person name="Thode G."/>
            <person name="Daga R.R."/>
            <person name="Cruzado L."/>
            <person name="Jimenez J."/>
            <person name="Sanchez M."/>
            <person name="del Rey F."/>
            <person name="Benito J."/>
            <person name="Dominguez A."/>
            <person name="Revuelta J.L."/>
            <person name="Moreno S."/>
            <person name="Armstrong J."/>
            <person name="Forsburg S.L."/>
            <person name="Cerutti L."/>
            <person name="Lowe T."/>
            <person name="McCombie W.R."/>
            <person name="Paulsen I."/>
            <person name="Potashkin J."/>
            <person name="Shpakovski G.V."/>
            <person name="Ussery D."/>
            <person name="Barrell B.G."/>
            <person name="Nurse P."/>
        </authorList>
    </citation>
    <scope>NUCLEOTIDE SEQUENCE [LARGE SCALE GENOMIC DNA]</scope>
    <source>
        <strain>972 / ATCC 24843</strain>
    </source>
</reference>
<reference evidence="3" key="2">
    <citation type="journal article" date="2006" name="Nat. Biotechnol.">
        <title>ORFeome cloning and global analysis of protein localization in the fission yeast Schizosaccharomyces pombe.</title>
        <authorList>
            <person name="Matsuyama A."/>
            <person name="Arai R."/>
            <person name="Yashiroda Y."/>
            <person name="Shirai A."/>
            <person name="Kamata A."/>
            <person name="Sekido S."/>
            <person name="Kobayashi Y."/>
            <person name="Hashimoto A."/>
            <person name="Hamamoto M."/>
            <person name="Hiraoka Y."/>
            <person name="Horinouchi S."/>
            <person name="Yoshida M."/>
        </authorList>
    </citation>
    <scope>SUBCELLULAR LOCATION [LARGE SCALE ANALYSIS]</scope>
</reference>
<organism>
    <name type="scientific">Schizosaccharomyces pombe (strain 972 / ATCC 24843)</name>
    <name type="common">Fission yeast</name>
    <dbReference type="NCBI Taxonomy" id="284812"/>
    <lineage>
        <taxon>Eukaryota</taxon>
        <taxon>Fungi</taxon>
        <taxon>Dikarya</taxon>
        <taxon>Ascomycota</taxon>
        <taxon>Taphrinomycotina</taxon>
        <taxon>Schizosaccharomycetes</taxon>
        <taxon>Schizosaccharomycetales</taxon>
        <taxon>Schizosaccharomycetaceae</taxon>
        <taxon>Schizosaccharomyces</taxon>
    </lineage>
</organism>
<evidence type="ECO:0000250" key="1">
    <source>
        <dbReference type="UniProtKB" id="P40368"/>
    </source>
</evidence>
<evidence type="ECO:0000269" key="2">
    <source>
    </source>
</evidence>
<evidence type="ECO:0000305" key="3"/>
<evidence type="ECO:0000305" key="4">
    <source>
    </source>
</evidence>
<evidence type="ECO:0000312" key="5">
    <source>
        <dbReference type="EMBL" id="CAB99395.1"/>
    </source>
</evidence>
<protein>
    <recommendedName>
        <fullName evidence="5">Nucleoporin nup82</fullName>
    </recommendedName>
    <alternativeName>
        <fullName evidence="1">Nuclear pore protein nup82</fullName>
    </alternativeName>
</protein>
<sequence length="803" mass="90612">MASTIMSQEVSWTDILEKHPALRWIKPIPEDWEIFPKHLCAFESFLYVAVGQEVRSLDCRLLKHKNEASHKNFYKKLFNPELDFMIEQICLSKNGRFLAVVGKSKIVILGLRSKLSEQNPLAESVSNFGESVNNFSNSEHQENGTNSLKLSEVTICSVAVINPSSQIVSVRFHPLGKSGRSLVVLTETSLLLYEAGNGVLMPDYEIPLKLTHQASNSFDADVDLHIPTAFCFSNVSQGWGVFTIYILTRGGDVFSVCPVMPANAMIPQDVLKQIRLILTKKEDDADAENHRRNVHWITKLLGEAALANDLSTSFVISEGSSELFDSSDYVSVRRPDDFSFIPSMQGPFLLQPAVADDELIEDYCDIYSFGMNPIDVLAIGGSEGRLDLLLLVSEVSGRWSKLNDHGLASMKLIVSQVHSLYLSNNNPYMVLQPDIQSPYSLIAYHANGLHVVDIESWARDLNLNFENSEFLNNEEENDEDELSNVLVSIPSRTSVLERLDTNPLNESTDAVVGCAQLYYPSLGKILISLTRNWQTTVFDDSDLATMGVNKESLSNEMDYSKSLGTSSLEQVDDLDEKLTYTPLYVSLLEKTPFTDPSIPSLVERTIVPAELQNEITVSSASLRFLGKVVARYRETLNLLDHGCSELHHRLKLQREEYERQQNHIYKLSDRISNFREKAWSTEHLEHLTSDMSMCEKRIDQVLQRVMDLRVPDLSDKEKQFIKEIGNYKEKVTGERGIEKRVETLKTLLQRTKPRDAQTTLVASSSDMRLAAIEQLQKLLAQQSLSIKELKTKTVSFQRLLQTS</sequence>
<proteinExistence type="inferred from homology"/>
<comment type="function">
    <text evidence="1">Functions as a component of the nuclear pore complex (NPC). NPC components, collectively referred to as nucleoporins (NUPs), can play the role of both NPC structural components and of docking or interaction partners for transiently associated nuclear transport factors (By similarity).</text>
</comment>
<comment type="subunit">
    <text evidence="1">Component of the nuclear pore complex (NPC) (By similarity). NPC constitutes the exclusive means of nucleocytoplasmic transport. NPCs allow the passive diffusion of ions and small molecules and the active, nuclear transport receptor-mediated bidirectional transport of macromolecules such as proteins, RNAs, ribonucleoparticles (RNPs), and ribosomal subunits across the nuclear envelope (By similarity).</text>
</comment>
<comment type="subcellular location">
    <subcellularLocation>
        <location evidence="2">Nucleus</location>
        <location evidence="2">Nuclear pore complex</location>
    </subcellularLocation>
    <subcellularLocation>
        <location evidence="4">Nucleus membrane</location>
        <topology evidence="4">Peripheral membrane protein</topology>
        <orientation evidence="4">Cytoplasmic side</orientation>
    </subcellularLocation>
</comment>
<gene>
    <name evidence="1" type="primary">nup82</name>
    <name type="ORF">SPBC13A2.02</name>
</gene>
<feature type="chain" id="PRO_0000351141" description="Nucleoporin nup82">
    <location>
        <begin position="1"/>
        <end position="803"/>
    </location>
</feature>
<dbReference type="EMBL" id="CU329671">
    <property type="protein sequence ID" value="CAB99395.1"/>
    <property type="molecule type" value="Genomic_DNA"/>
</dbReference>
<dbReference type="RefSeq" id="NP_596415.1">
    <property type="nucleotide sequence ID" value="NM_001022334.2"/>
</dbReference>
<dbReference type="SMR" id="Q9P382"/>
<dbReference type="BioGRID" id="276250">
    <property type="interactions" value="1"/>
</dbReference>
<dbReference type="FunCoup" id="Q9P382">
    <property type="interactions" value="36"/>
</dbReference>
<dbReference type="STRING" id="284812.Q9P382"/>
<dbReference type="iPTMnet" id="Q9P382"/>
<dbReference type="PaxDb" id="4896-SPBC13A2.02.1"/>
<dbReference type="DNASU" id="2539697"/>
<dbReference type="EnsemblFungi" id="SPBC13A2.02.1">
    <property type="protein sequence ID" value="SPBC13A2.02.1:pep"/>
    <property type="gene ID" value="SPBC13A2.02"/>
</dbReference>
<dbReference type="GeneID" id="2539697"/>
<dbReference type="KEGG" id="spo:2539697"/>
<dbReference type="PomBase" id="SPBC13A2.02">
    <property type="gene designation" value="nup82"/>
</dbReference>
<dbReference type="VEuPathDB" id="FungiDB:SPBC13A2.02"/>
<dbReference type="eggNOG" id="ENOG502QUNM">
    <property type="taxonomic scope" value="Eukaryota"/>
</dbReference>
<dbReference type="HOGENOM" id="CLU_006117_0_0_1"/>
<dbReference type="InParanoid" id="Q9P382"/>
<dbReference type="OMA" id="WHPLGVH"/>
<dbReference type="PhylomeDB" id="Q9P382"/>
<dbReference type="Reactome" id="R-SPO-159227">
    <property type="pathway name" value="Transport of the SLBP independent Mature mRNA"/>
</dbReference>
<dbReference type="Reactome" id="R-SPO-159231">
    <property type="pathway name" value="Transport of Mature mRNA Derived from an Intronless Transcript"/>
</dbReference>
<dbReference type="Reactome" id="R-SPO-159236">
    <property type="pathway name" value="Transport of Mature mRNA derived from an Intron-Containing Transcript"/>
</dbReference>
<dbReference type="Reactome" id="R-SPO-3371453">
    <property type="pathway name" value="Regulation of HSF1-mediated heat shock response"/>
</dbReference>
<dbReference type="Reactome" id="R-SPO-4085377">
    <property type="pathway name" value="SUMOylation of SUMOylation proteins"/>
</dbReference>
<dbReference type="Reactome" id="R-SPO-4551638">
    <property type="pathway name" value="SUMOylation of chromatin organization proteins"/>
</dbReference>
<dbReference type="Reactome" id="R-SPO-4570464">
    <property type="pathway name" value="SUMOylation of RNA binding proteins"/>
</dbReference>
<dbReference type="Reactome" id="R-SPO-5578749">
    <property type="pathway name" value="Transcriptional regulation by small RNAs"/>
</dbReference>
<dbReference type="PRO" id="PR:Q9P382"/>
<dbReference type="Proteomes" id="UP000002485">
    <property type="component" value="Chromosome II"/>
</dbReference>
<dbReference type="GO" id="GO:0005635">
    <property type="term" value="C:nuclear envelope"/>
    <property type="evidence" value="ECO:0007005"/>
    <property type="project" value="PomBase"/>
</dbReference>
<dbReference type="GO" id="GO:0031965">
    <property type="term" value="C:nuclear membrane"/>
    <property type="evidence" value="ECO:0007669"/>
    <property type="project" value="UniProtKB-SubCell"/>
</dbReference>
<dbReference type="GO" id="GO:0005643">
    <property type="term" value="C:nuclear pore"/>
    <property type="evidence" value="ECO:0000314"/>
    <property type="project" value="PomBase"/>
</dbReference>
<dbReference type="GO" id="GO:0044614">
    <property type="term" value="C:nuclear pore cytoplasmic filaments"/>
    <property type="evidence" value="ECO:0000266"/>
    <property type="project" value="PomBase"/>
</dbReference>
<dbReference type="GO" id="GO:0044612">
    <property type="term" value="C:nuclear pore linkers"/>
    <property type="evidence" value="ECO:0000266"/>
    <property type="project" value="PomBase"/>
</dbReference>
<dbReference type="GO" id="GO:0017056">
    <property type="term" value="F:structural constituent of nuclear pore"/>
    <property type="evidence" value="ECO:0007669"/>
    <property type="project" value="InterPro"/>
</dbReference>
<dbReference type="GO" id="GO:0006406">
    <property type="term" value="P:mRNA export from nucleus"/>
    <property type="evidence" value="ECO:0000318"/>
    <property type="project" value="GO_Central"/>
</dbReference>
<dbReference type="GO" id="GO:0006606">
    <property type="term" value="P:protein import into nucleus"/>
    <property type="evidence" value="ECO:0000318"/>
    <property type="project" value="GO_Central"/>
</dbReference>
<dbReference type="GO" id="GO:0000055">
    <property type="term" value="P:ribosomal large subunit export from nucleus"/>
    <property type="evidence" value="ECO:0000318"/>
    <property type="project" value="GO_Central"/>
</dbReference>
<dbReference type="GO" id="GO:0000056">
    <property type="term" value="P:ribosomal small subunit export from nucleus"/>
    <property type="evidence" value="ECO:0000318"/>
    <property type="project" value="GO_Central"/>
</dbReference>
<dbReference type="InterPro" id="IPR019321">
    <property type="entry name" value="Nucleoporin_Nup88"/>
</dbReference>
<dbReference type="InterPro" id="IPR037700">
    <property type="entry name" value="NUP88/NUP82"/>
</dbReference>
<dbReference type="PANTHER" id="PTHR13257:SF0">
    <property type="entry name" value="NUCLEAR PORE COMPLEX PROTEIN NUP88"/>
    <property type="match status" value="1"/>
</dbReference>
<dbReference type="PANTHER" id="PTHR13257">
    <property type="entry name" value="NUCLEOPORIN NUP84-RELATED"/>
    <property type="match status" value="1"/>
</dbReference>
<dbReference type="Pfam" id="PF10168">
    <property type="entry name" value="Nup88"/>
    <property type="match status" value="1"/>
</dbReference>
<name>NUP82_SCHPO</name>